<accession>P81377</accession>
<name>KAP1_RAT</name>
<keyword id="KW-0114">cAMP</keyword>
<keyword id="KW-0116">cAMP-binding</keyword>
<keyword id="KW-1003">Cell membrane</keyword>
<keyword id="KW-1015">Disulfide bond</keyword>
<keyword id="KW-0472">Membrane</keyword>
<keyword id="KW-0488">Methylation</keyword>
<keyword id="KW-0944">Nitration</keyword>
<keyword id="KW-0547">Nucleotide-binding</keyword>
<keyword id="KW-0597">Phosphoprotein</keyword>
<keyword id="KW-1185">Reference proteome</keyword>
<keyword id="KW-0677">Repeat</keyword>
<comment type="function">
    <text evidence="1">Regulatory subunit of the cAMP-dependent protein kinases involved in cAMP signaling in cells.</text>
</comment>
<comment type="subunit">
    <text evidence="1">The inactive holoenzyme is composed of two regulatory chains and two catalytic chains. Activation by cAMP releases the two active catalytic monomers and the regulatory dimer. Interacts with PRKX; regulates this cAMP-dependent protein kinase (By similarity). Interacts with smAKAP; this interaction may target PRKAR1B to the plasma membrane (By similarity).</text>
</comment>
<comment type="subcellular location">
    <subcellularLocation>
        <location evidence="1">Cell membrane</location>
    </subcellularLocation>
</comment>
<comment type="tissue specificity">
    <text>Abundant in brain and testis. No expression in lung, heart, liver, spleen, kidney and skeletal muscle.</text>
</comment>
<comment type="PTM">
    <text>The pseudophosphorylation site binds to the substrate-binding region of the catalytic chain, resulting in the inhibition of its activity.</text>
</comment>
<comment type="similarity">
    <text evidence="5">Belongs to the cAMP-dependent kinase regulatory chain family.</text>
</comment>
<dbReference type="PIR" id="A60669">
    <property type="entry name" value="A60669"/>
</dbReference>
<dbReference type="RefSeq" id="NP_001405604.1">
    <property type="nucleotide sequence ID" value="NM_001418675.1"/>
</dbReference>
<dbReference type="RefSeq" id="XP_038945043.1">
    <property type="nucleotide sequence ID" value="XM_039089115.2"/>
</dbReference>
<dbReference type="RefSeq" id="XP_038945044.1">
    <property type="nucleotide sequence ID" value="XM_039089116.2"/>
</dbReference>
<dbReference type="RefSeq" id="XP_038945045.1">
    <property type="nucleotide sequence ID" value="XM_039089117.2"/>
</dbReference>
<dbReference type="SMR" id="P81377"/>
<dbReference type="FunCoup" id="P81377">
    <property type="interactions" value="1370"/>
</dbReference>
<dbReference type="GuidetoPHARMACOLOGY" id="1473"/>
<dbReference type="GlyGen" id="P81377">
    <property type="glycosylation" value="1 site"/>
</dbReference>
<dbReference type="iPTMnet" id="P81377"/>
<dbReference type="PhosphoSitePlus" id="P81377"/>
<dbReference type="jPOST" id="P81377"/>
<dbReference type="PaxDb" id="10116-ENSRNOP00000033202"/>
<dbReference type="Ensembl" id="ENSRNOT00000101865.1">
    <property type="protein sequence ID" value="ENSRNOP00000083988.1"/>
    <property type="gene ID" value="ENSRNOG00000028733.7"/>
</dbReference>
<dbReference type="GeneID" id="25521"/>
<dbReference type="UCSC" id="RGD:3392">
    <property type="organism name" value="rat"/>
</dbReference>
<dbReference type="AGR" id="RGD:3392"/>
<dbReference type="RGD" id="3392">
    <property type="gene designation" value="Prkar1b"/>
</dbReference>
<dbReference type="eggNOG" id="KOG1113">
    <property type="taxonomic scope" value="Eukaryota"/>
</dbReference>
<dbReference type="GeneTree" id="ENSGT00940000157513"/>
<dbReference type="InParanoid" id="P81377"/>
<dbReference type="OrthoDB" id="417078at2759"/>
<dbReference type="PhylomeDB" id="P81377"/>
<dbReference type="Reactome" id="R-RNO-163615">
    <property type="pathway name" value="PKA activation"/>
</dbReference>
<dbReference type="Reactome" id="R-RNO-164378">
    <property type="pathway name" value="PKA activation in glucagon signalling"/>
</dbReference>
<dbReference type="Reactome" id="R-RNO-180024">
    <property type="pathway name" value="DARPP-32 events"/>
</dbReference>
<dbReference type="Reactome" id="R-RNO-432040">
    <property type="pathway name" value="Vasopressin regulates renal water homeostasis via Aquaporins"/>
</dbReference>
<dbReference type="Reactome" id="R-RNO-442720">
    <property type="pathway name" value="CREB1 phosphorylation through the activation of Adenylate Cyclase"/>
</dbReference>
<dbReference type="Reactome" id="R-RNO-5610787">
    <property type="pathway name" value="Hedgehog 'off' state"/>
</dbReference>
<dbReference type="Reactome" id="R-RNO-9634597">
    <property type="pathway name" value="GPER1 signaling"/>
</dbReference>
<dbReference type="Reactome" id="R-RNO-983231">
    <property type="pathway name" value="Factors involved in megakaryocyte development and platelet production"/>
</dbReference>
<dbReference type="Reactome" id="R-RNO-9856530">
    <property type="pathway name" value="High laminar flow shear stress activates signaling by PIEZO1 and PECAM1:CDH5:KDR in endothelial cells"/>
</dbReference>
<dbReference type="PRO" id="PR:P81377"/>
<dbReference type="Proteomes" id="UP000002494">
    <property type="component" value="Chromosome 12"/>
</dbReference>
<dbReference type="GO" id="GO:0005952">
    <property type="term" value="C:cAMP-dependent protein kinase complex"/>
    <property type="evidence" value="ECO:0000314"/>
    <property type="project" value="RGD"/>
</dbReference>
<dbReference type="GO" id="GO:0005737">
    <property type="term" value="C:cytoplasm"/>
    <property type="evidence" value="ECO:0000266"/>
    <property type="project" value="RGD"/>
</dbReference>
<dbReference type="GO" id="GO:0005829">
    <property type="term" value="C:cytosol"/>
    <property type="evidence" value="ECO:0000318"/>
    <property type="project" value="GO_Central"/>
</dbReference>
<dbReference type="GO" id="GO:0098978">
    <property type="term" value="C:glutamatergic synapse"/>
    <property type="evidence" value="ECO:0000266"/>
    <property type="project" value="RGD"/>
</dbReference>
<dbReference type="GO" id="GO:0098686">
    <property type="term" value="C:hippocampal mossy fiber to CA3 synapse"/>
    <property type="evidence" value="ECO:0000266"/>
    <property type="project" value="RGD"/>
</dbReference>
<dbReference type="GO" id="GO:0005771">
    <property type="term" value="C:multivesicular body"/>
    <property type="evidence" value="ECO:0000266"/>
    <property type="project" value="RGD"/>
</dbReference>
<dbReference type="GO" id="GO:0005886">
    <property type="term" value="C:plasma membrane"/>
    <property type="evidence" value="ECO:0007669"/>
    <property type="project" value="UniProtKB-SubCell"/>
</dbReference>
<dbReference type="GO" id="GO:0098794">
    <property type="term" value="C:postsynapse"/>
    <property type="evidence" value="ECO:0000266"/>
    <property type="project" value="RGD"/>
</dbReference>
<dbReference type="GO" id="GO:0098685">
    <property type="term" value="C:Schaffer collateral - CA1 synapse"/>
    <property type="evidence" value="ECO:0000266"/>
    <property type="project" value="RGD"/>
</dbReference>
<dbReference type="GO" id="GO:0045202">
    <property type="term" value="C:synapse"/>
    <property type="evidence" value="ECO:0000266"/>
    <property type="project" value="RGD"/>
</dbReference>
<dbReference type="GO" id="GO:0030552">
    <property type="term" value="F:cAMP binding"/>
    <property type="evidence" value="ECO:0000314"/>
    <property type="project" value="RGD"/>
</dbReference>
<dbReference type="GO" id="GO:0004862">
    <property type="term" value="F:cAMP-dependent protein kinase inhibitor activity"/>
    <property type="evidence" value="ECO:0000266"/>
    <property type="project" value="RGD"/>
</dbReference>
<dbReference type="GO" id="GO:0008603">
    <property type="term" value="F:cAMP-dependent protein kinase regulator activity"/>
    <property type="evidence" value="ECO:0000314"/>
    <property type="project" value="RGD"/>
</dbReference>
<dbReference type="GO" id="GO:0034236">
    <property type="term" value="F:protein kinase A catalytic subunit binding"/>
    <property type="evidence" value="ECO:0000266"/>
    <property type="project" value="RGD"/>
</dbReference>
<dbReference type="GO" id="GO:0007189">
    <property type="term" value="P:adenylate cyclase-activating G protein-coupled receptor signaling pathway"/>
    <property type="evidence" value="ECO:0000318"/>
    <property type="project" value="GO_Central"/>
</dbReference>
<dbReference type="GO" id="GO:0007611">
    <property type="term" value="P:learning or memory"/>
    <property type="evidence" value="ECO:0000266"/>
    <property type="project" value="RGD"/>
</dbReference>
<dbReference type="GO" id="GO:0050804">
    <property type="term" value="P:modulation of chemical synaptic transmission"/>
    <property type="evidence" value="ECO:0000266"/>
    <property type="project" value="RGD"/>
</dbReference>
<dbReference type="GO" id="GO:0141162">
    <property type="term" value="P:negative regulation of cAMP/PKA signal transduction"/>
    <property type="evidence" value="ECO:0000266"/>
    <property type="project" value="RGD"/>
</dbReference>
<dbReference type="GO" id="GO:2000463">
    <property type="term" value="P:positive regulation of excitatory postsynaptic potential"/>
    <property type="evidence" value="ECO:0000315"/>
    <property type="project" value="RGD"/>
</dbReference>
<dbReference type="GO" id="GO:1903367">
    <property type="term" value="P:positive regulation of fear response"/>
    <property type="evidence" value="ECO:0000315"/>
    <property type="project" value="RGD"/>
</dbReference>
<dbReference type="GO" id="GO:1900273">
    <property type="term" value="P:positive regulation of long-term synaptic potentiation"/>
    <property type="evidence" value="ECO:0000315"/>
    <property type="project" value="RGD"/>
</dbReference>
<dbReference type="GO" id="GO:0098693">
    <property type="term" value="P:regulation of synaptic vesicle cycle"/>
    <property type="evidence" value="ECO:0000266"/>
    <property type="project" value="RGD"/>
</dbReference>
<dbReference type="CDD" id="cd00038">
    <property type="entry name" value="CAP_ED"/>
    <property type="match status" value="2"/>
</dbReference>
<dbReference type="CDD" id="cd12102">
    <property type="entry name" value="DD_RIbeta_PKA"/>
    <property type="match status" value="1"/>
</dbReference>
<dbReference type="FunFam" id="2.60.120.10:FF:000013">
    <property type="entry name" value="cAMP-dependent protein kinase type I regulatory subunit"/>
    <property type="match status" value="1"/>
</dbReference>
<dbReference type="FunFam" id="1.20.890.10:FF:000001">
    <property type="entry name" value="cAMP-dependent protein kinase type I-alpha regulatory subunit"/>
    <property type="match status" value="1"/>
</dbReference>
<dbReference type="FunFam" id="2.60.120.10:FF:000006">
    <property type="entry name" value="cAMP-dependent protein kinase type I-alpha regulatory subunit"/>
    <property type="match status" value="1"/>
</dbReference>
<dbReference type="Gene3D" id="1.20.890.10">
    <property type="entry name" value="cAMP-dependent protein kinase regulatory subunit, dimerization-anchoring domain"/>
    <property type="match status" value="1"/>
</dbReference>
<dbReference type="Gene3D" id="2.60.120.10">
    <property type="entry name" value="Jelly Rolls"/>
    <property type="match status" value="2"/>
</dbReference>
<dbReference type="InterPro" id="IPR050503">
    <property type="entry name" value="cAMP-dep_PK_reg_su-like"/>
</dbReference>
<dbReference type="InterPro" id="IPR012198">
    <property type="entry name" value="cAMP_dep_PK_reg_su"/>
</dbReference>
<dbReference type="InterPro" id="IPR003117">
    <property type="entry name" value="cAMP_dep_PK_reg_su_I/II_a/b"/>
</dbReference>
<dbReference type="InterPro" id="IPR018488">
    <property type="entry name" value="cNMP-bd_CS"/>
</dbReference>
<dbReference type="InterPro" id="IPR000595">
    <property type="entry name" value="cNMP-bd_dom"/>
</dbReference>
<dbReference type="InterPro" id="IPR018490">
    <property type="entry name" value="cNMP-bd_dom_sf"/>
</dbReference>
<dbReference type="InterPro" id="IPR042818">
    <property type="entry name" value="RIbeta_DD"/>
</dbReference>
<dbReference type="InterPro" id="IPR014710">
    <property type="entry name" value="RmlC-like_jellyroll"/>
</dbReference>
<dbReference type="PANTHER" id="PTHR11635">
    <property type="entry name" value="CAMP-DEPENDENT PROTEIN KINASE REGULATORY CHAIN"/>
    <property type="match status" value="1"/>
</dbReference>
<dbReference type="PANTHER" id="PTHR11635:SF126">
    <property type="entry name" value="CAMP-DEPENDENT PROTEIN KINASE TYPE I-BETA REGULATORY SUBUNIT"/>
    <property type="match status" value="1"/>
</dbReference>
<dbReference type="Pfam" id="PF00027">
    <property type="entry name" value="cNMP_binding"/>
    <property type="match status" value="2"/>
</dbReference>
<dbReference type="Pfam" id="PF02197">
    <property type="entry name" value="RIIa"/>
    <property type="match status" value="1"/>
</dbReference>
<dbReference type="PIRSF" id="PIRSF000548">
    <property type="entry name" value="PK_regulatory"/>
    <property type="match status" value="1"/>
</dbReference>
<dbReference type="PRINTS" id="PR00103">
    <property type="entry name" value="CAMPKINASE"/>
</dbReference>
<dbReference type="SMART" id="SM00100">
    <property type="entry name" value="cNMP"/>
    <property type="match status" value="2"/>
</dbReference>
<dbReference type="SMART" id="SM00394">
    <property type="entry name" value="RIIa"/>
    <property type="match status" value="1"/>
</dbReference>
<dbReference type="SUPFAM" id="SSF51206">
    <property type="entry name" value="cAMP-binding domain-like"/>
    <property type="match status" value="2"/>
</dbReference>
<dbReference type="SUPFAM" id="SSF47391">
    <property type="entry name" value="Dimerization-anchoring domain of cAMP-dependent PK regulatory subunit"/>
    <property type="match status" value="1"/>
</dbReference>
<dbReference type="PROSITE" id="PS00888">
    <property type="entry name" value="CNMP_BINDING_1"/>
    <property type="match status" value="2"/>
</dbReference>
<dbReference type="PROSITE" id="PS00889">
    <property type="entry name" value="CNMP_BINDING_2"/>
    <property type="match status" value="2"/>
</dbReference>
<dbReference type="PROSITE" id="PS50042">
    <property type="entry name" value="CNMP_BINDING_3"/>
    <property type="match status" value="2"/>
</dbReference>
<evidence type="ECO:0000250" key="1"/>
<evidence type="ECO:0000250" key="2">
    <source>
        <dbReference type="UniProtKB" id="P12849"/>
    </source>
</evidence>
<evidence type="ECO:0000250" key="3">
    <source>
        <dbReference type="UniProtKB" id="P31321"/>
    </source>
</evidence>
<evidence type="ECO:0000256" key="4">
    <source>
        <dbReference type="SAM" id="MobiDB-lite"/>
    </source>
</evidence>
<evidence type="ECO:0000305" key="5"/>
<organism>
    <name type="scientific">Rattus norvegicus</name>
    <name type="common">Rat</name>
    <dbReference type="NCBI Taxonomy" id="10116"/>
    <lineage>
        <taxon>Eukaryota</taxon>
        <taxon>Metazoa</taxon>
        <taxon>Chordata</taxon>
        <taxon>Craniata</taxon>
        <taxon>Vertebrata</taxon>
        <taxon>Euteleostomi</taxon>
        <taxon>Mammalia</taxon>
        <taxon>Eutheria</taxon>
        <taxon>Euarchontoglires</taxon>
        <taxon>Glires</taxon>
        <taxon>Rodentia</taxon>
        <taxon>Myomorpha</taxon>
        <taxon>Muroidea</taxon>
        <taxon>Muridae</taxon>
        <taxon>Murinae</taxon>
        <taxon>Rattus</taxon>
    </lineage>
</organism>
<reference key="1">
    <citation type="journal article" date="1990" name="Mol. Reprod. Dev.">
        <title>Rat RI beta isoform of type I regulatory subunit of cyclic adenosine monophosphate-dependent protein kinase: cDNA sequence analysis, mRNA tissue specificity, and rat/mouse difference in expression in testis.</title>
        <authorList>
            <person name="Massa J.S."/>
            <person name="Fellows R.E."/>
            <person name="Maurer R.A."/>
        </authorList>
    </citation>
    <scope>NUCLEOTIDE SEQUENCE</scope>
    <source>
        <tissue>Brain</tissue>
    </source>
</reference>
<gene>
    <name type="primary">Prkar1b</name>
</gene>
<feature type="chain" id="PRO_0000205383" description="cAMP-dependent protein kinase type I-beta regulatory subunit">
    <location>
        <begin position="1"/>
        <end position="381"/>
    </location>
</feature>
<feature type="region of interest" description="Dimerization and phosphorylation">
    <location>
        <begin position="1"/>
        <end position="136"/>
    </location>
</feature>
<feature type="region of interest" description="Disordered" evidence="4">
    <location>
        <begin position="66"/>
        <end position="88"/>
    </location>
</feature>
<feature type="short sequence motif" description="Pseudophosphorylation motif">
    <location>
        <begin position="96"/>
        <end position="100"/>
    </location>
</feature>
<feature type="binding site">
    <location>
        <begin position="137"/>
        <end position="254"/>
    </location>
    <ligand>
        <name>3',5'-cyclic AMP</name>
        <dbReference type="ChEBI" id="CHEBI:58165"/>
        <label>1</label>
    </ligand>
</feature>
<feature type="binding site" evidence="1">
    <location>
        <position position="202"/>
    </location>
    <ligand>
        <name>3',5'-cyclic AMP</name>
        <dbReference type="ChEBI" id="CHEBI:58165"/>
        <label>1</label>
    </ligand>
</feature>
<feature type="binding site" evidence="1">
    <location>
        <position position="211"/>
    </location>
    <ligand>
        <name>3',5'-cyclic AMP</name>
        <dbReference type="ChEBI" id="CHEBI:58165"/>
        <label>1</label>
    </ligand>
</feature>
<feature type="binding site">
    <location>
        <begin position="255"/>
        <end position="381"/>
    </location>
    <ligand>
        <name>3',5'-cyclic AMP</name>
        <dbReference type="ChEBI" id="CHEBI:58165"/>
        <label>2</label>
    </ligand>
</feature>
<feature type="binding site" evidence="1">
    <location>
        <position position="326"/>
    </location>
    <ligand>
        <name>3',5'-cyclic AMP</name>
        <dbReference type="ChEBI" id="CHEBI:58165"/>
        <label>2</label>
    </ligand>
</feature>
<feature type="binding site" evidence="1">
    <location>
        <position position="335"/>
    </location>
    <ligand>
        <name>3',5'-cyclic AMP</name>
        <dbReference type="ChEBI" id="CHEBI:58165"/>
        <label>2</label>
    </ligand>
</feature>
<feature type="modified residue" description="Phosphoserine" evidence="3">
    <location>
        <position position="3"/>
    </location>
</feature>
<feature type="modified residue" description="3'-nitrotyrosine" evidence="3">
    <location>
        <position position="21"/>
    </location>
</feature>
<feature type="modified residue" description="Phosphoserine" evidence="3">
    <location>
        <position position="77"/>
    </location>
</feature>
<feature type="modified residue" description="Phosphoserine" evidence="3">
    <location>
        <position position="83"/>
    </location>
</feature>
<feature type="modified residue" description="Phosphothreonine" evidence="2">
    <location>
        <position position="85"/>
    </location>
</feature>
<feature type="modified residue" description="Omega-N-methylarginine" evidence="2">
    <location>
        <position position="97"/>
    </location>
</feature>
<feature type="disulfide bond" description="Interchain (with C-39)" evidence="1">
    <location>
        <position position="18"/>
    </location>
</feature>
<feature type="disulfide bond" description="Interchain (with C-18)" evidence="1">
    <location>
        <position position="39"/>
    </location>
</feature>
<sequence>MASPSCFHSEDEDSLKGCEMYVQKHGIQQVLKECIVHLCVAKPDRPLRFLREHFEKLEKEENRQILARQKSNSQCDSHDEEISPTPPNPVVKARRRRGGVSAEVYTEEDAVSYVRKVIPKDYKTMTALAKAISKNVLFSHLDDNERSDIFDAMFPVTHIDGETVIQQGNEGDNFYVIDQGEVDVYVNGEWVTNISEGGSFGELALIYGTPRAATVKAKTDLKLWGIDRDSYRRILMGSTLRKRKMYEEFLSKVSILESLEKWERLTVADALEPVQFEDGEKIVVQGEPGDDFYIITEGTASVLQRRSPNEEYVEVGRLGPSDYFGEIALLLNRPRAATVVARGPLKCVKLDRPRFERVLGPCSEILKRNIQRYNSFISLTV</sequence>
<protein>
    <recommendedName>
        <fullName>cAMP-dependent protein kinase type I-beta regulatory subunit</fullName>
    </recommendedName>
</protein>
<proteinExistence type="evidence at transcript level"/>